<gene>
    <name evidence="1" type="primary">FXYD1</name>
    <name evidence="1" type="synonym">PLM</name>
</gene>
<proteinExistence type="evidence at protein level"/>
<reference key="1">
    <citation type="submission" date="2005-08" db="EMBL/GenBank/DDBJ databases">
        <authorList>
            <consortium name="NIH - Mammalian Gene Collection (MGC) project"/>
        </authorList>
    </citation>
    <scope>NUCLEOTIDE SEQUENCE [LARGE SCALE MRNA]</scope>
    <source>
        <strain>Crossbred X Angus</strain>
        <tissue>Liver</tissue>
    </source>
</reference>
<reference key="2">
    <citation type="journal article" date="2003" name="J. Neurosci.">
        <title>Phospholemman, a single-span membrane protein, is an accessory protein of Na,K-ATPase in cerebellum and choroid plexus.</title>
        <authorList>
            <person name="Feschenko M.S."/>
            <person name="Donnet C."/>
            <person name="Wetzel R.K."/>
            <person name="Asinovski N.K."/>
            <person name="Jones L.R."/>
            <person name="Sweadner K.J."/>
        </authorList>
    </citation>
    <scope>FUNCTION</scope>
    <scope>IDENTIFICATION IN SODIUM/POTASSIUM-TRANSPORTING ATPASE COMPLEX</scope>
    <scope>INTERACTION WITH ATP1A1; ATP1A2 AND ATP1A3</scope>
    <scope>TISSUE SPECIFICITY</scope>
</reference>
<organism>
    <name type="scientific">Bos taurus</name>
    <name type="common">Bovine</name>
    <dbReference type="NCBI Taxonomy" id="9913"/>
    <lineage>
        <taxon>Eukaryota</taxon>
        <taxon>Metazoa</taxon>
        <taxon>Chordata</taxon>
        <taxon>Craniata</taxon>
        <taxon>Vertebrata</taxon>
        <taxon>Euteleostomi</taxon>
        <taxon>Mammalia</taxon>
        <taxon>Eutheria</taxon>
        <taxon>Laurasiatheria</taxon>
        <taxon>Artiodactyla</taxon>
        <taxon>Ruminantia</taxon>
        <taxon>Pecora</taxon>
        <taxon>Bovidae</taxon>
        <taxon>Bovinae</taxon>
        <taxon>Bos</taxon>
    </lineage>
</organism>
<dbReference type="EMBL" id="BC102671">
    <property type="protein sequence ID" value="AAI02672.1"/>
    <property type="molecule type" value="mRNA"/>
</dbReference>
<dbReference type="RefSeq" id="NP_001069878.1">
    <property type="nucleotide sequence ID" value="NM_001076410.1"/>
</dbReference>
<dbReference type="RefSeq" id="XP_005219074.1">
    <property type="nucleotide sequence ID" value="XM_005219017.3"/>
</dbReference>
<dbReference type="RefSeq" id="XP_005219076.1">
    <property type="nucleotide sequence ID" value="XM_005219019.4"/>
</dbReference>
<dbReference type="RefSeq" id="XP_005219077.1">
    <property type="nucleotide sequence ID" value="XM_005219020.3"/>
</dbReference>
<dbReference type="RefSeq" id="XP_010813107.1">
    <property type="nucleotide sequence ID" value="XM_010814805.2"/>
</dbReference>
<dbReference type="RefSeq" id="XP_024834269.1">
    <property type="nucleotide sequence ID" value="XM_024978501.2"/>
</dbReference>
<dbReference type="RefSeq" id="XP_024834270.1">
    <property type="nucleotide sequence ID" value="XM_024978502.2"/>
</dbReference>
<dbReference type="RefSeq" id="XP_059732900.1">
    <property type="nucleotide sequence ID" value="XM_059876917.1"/>
</dbReference>
<dbReference type="SMR" id="Q3SZX0"/>
<dbReference type="FunCoup" id="Q3SZX0">
    <property type="interactions" value="23"/>
</dbReference>
<dbReference type="STRING" id="9913.ENSBTAP00000072200"/>
<dbReference type="PaxDb" id="9913-ENSBTAP00000042049"/>
<dbReference type="Ensembl" id="ENSBTAT00000044563.2">
    <property type="protein sequence ID" value="ENSBTAP00000042049.1"/>
    <property type="gene ID" value="ENSBTAG00000017816.6"/>
</dbReference>
<dbReference type="GeneID" id="616139"/>
<dbReference type="KEGG" id="bta:616139"/>
<dbReference type="CTD" id="5348"/>
<dbReference type="VEuPathDB" id="HostDB:ENSBTAG00000017816"/>
<dbReference type="VGNC" id="VGNC:29156">
    <property type="gene designation" value="FXYD1"/>
</dbReference>
<dbReference type="eggNOG" id="ENOG502S5XM">
    <property type="taxonomic scope" value="Eukaryota"/>
</dbReference>
<dbReference type="GeneTree" id="ENSGT00940000153062"/>
<dbReference type="HOGENOM" id="CLU_171208_2_0_1"/>
<dbReference type="InParanoid" id="Q3SZX0"/>
<dbReference type="OMA" id="PFNYDYH"/>
<dbReference type="OrthoDB" id="8430468at2759"/>
<dbReference type="TreeFam" id="TF333443"/>
<dbReference type="Reactome" id="R-BTA-5578775">
    <property type="pathway name" value="Ion homeostasis"/>
</dbReference>
<dbReference type="Reactome" id="R-BTA-936837">
    <property type="pathway name" value="Ion transport by P-type ATPases"/>
</dbReference>
<dbReference type="Proteomes" id="UP000009136">
    <property type="component" value="Chromosome 18"/>
</dbReference>
<dbReference type="Bgee" id="ENSBTAG00000017816">
    <property type="expression patterns" value="Expressed in laryngeal cartilage and 102 other cell types or tissues"/>
</dbReference>
<dbReference type="GO" id="GO:0016324">
    <property type="term" value="C:apical plasma membrane"/>
    <property type="evidence" value="ECO:0000250"/>
    <property type="project" value="UniProtKB"/>
</dbReference>
<dbReference type="GO" id="GO:0005901">
    <property type="term" value="C:caveola"/>
    <property type="evidence" value="ECO:0000250"/>
    <property type="project" value="UniProtKB"/>
</dbReference>
<dbReference type="GO" id="GO:0014704">
    <property type="term" value="C:intercalated disc"/>
    <property type="evidence" value="ECO:0000250"/>
    <property type="project" value="UniProtKB"/>
</dbReference>
<dbReference type="GO" id="GO:0042383">
    <property type="term" value="C:sarcolemma"/>
    <property type="evidence" value="ECO:0000250"/>
    <property type="project" value="UniProtKB"/>
</dbReference>
<dbReference type="GO" id="GO:0005890">
    <property type="term" value="C:sodium:potassium-exchanging ATPase complex"/>
    <property type="evidence" value="ECO:0000314"/>
    <property type="project" value="UniProtKB"/>
</dbReference>
<dbReference type="GO" id="GO:0030315">
    <property type="term" value="C:T-tubule"/>
    <property type="evidence" value="ECO:0000250"/>
    <property type="project" value="UniProtKB"/>
</dbReference>
<dbReference type="GO" id="GO:0017080">
    <property type="term" value="F:sodium channel regulator activity"/>
    <property type="evidence" value="ECO:0000318"/>
    <property type="project" value="GO_Central"/>
</dbReference>
<dbReference type="GO" id="GO:0010734">
    <property type="term" value="P:negative regulation of protein glutathionylation"/>
    <property type="evidence" value="ECO:0000250"/>
    <property type="project" value="UniProtKB"/>
</dbReference>
<dbReference type="GO" id="GO:1903278">
    <property type="term" value="P:positive regulation of sodium ion export across plasma membrane"/>
    <property type="evidence" value="ECO:0000314"/>
    <property type="project" value="UniProtKB"/>
</dbReference>
<dbReference type="GO" id="GO:0006813">
    <property type="term" value="P:potassium ion transport"/>
    <property type="evidence" value="ECO:0007669"/>
    <property type="project" value="UniProtKB-KW"/>
</dbReference>
<dbReference type="GO" id="GO:0086036">
    <property type="term" value="P:regulation of cardiac muscle cell membrane potential"/>
    <property type="evidence" value="ECO:0007669"/>
    <property type="project" value="Ensembl"/>
</dbReference>
<dbReference type="GO" id="GO:0006814">
    <property type="term" value="P:sodium ion transport"/>
    <property type="evidence" value="ECO:0007669"/>
    <property type="project" value="UniProtKB-KW"/>
</dbReference>
<dbReference type="CDD" id="cd20317">
    <property type="entry name" value="FXYD1"/>
    <property type="match status" value="1"/>
</dbReference>
<dbReference type="FunFam" id="1.20.5.780:FF:000002">
    <property type="entry name" value="FXYD domain-containing ion transport regulator"/>
    <property type="match status" value="1"/>
</dbReference>
<dbReference type="Gene3D" id="1.20.5.780">
    <property type="entry name" value="Single helix bin"/>
    <property type="match status" value="1"/>
</dbReference>
<dbReference type="InterPro" id="IPR047297">
    <property type="entry name" value="FXYD_motif"/>
</dbReference>
<dbReference type="InterPro" id="IPR000272">
    <property type="entry name" value="Ion-transport_regulator_FXYD"/>
</dbReference>
<dbReference type="InterPro" id="IPR047281">
    <property type="entry name" value="PLM"/>
</dbReference>
<dbReference type="PANTHER" id="PTHR14132:SF12">
    <property type="entry name" value="PHOSPHOLEMMAN"/>
    <property type="match status" value="1"/>
</dbReference>
<dbReference type="PANTHER" id="PTHR14132">
    <property type="entry name" value="SODIUM/POTASSIUM-TRANSPORTING ATPASE SUBUNIT GAMMA"/>
    <property type="match status" value="1"/>
</dbReference>
<dbReference type="Pfam" id="PF02038">
    <property type="entry name" value="ATP1G1_PLM_MAT8"/>
    <property type="match status" value="1"/>
</dbReference>
<dbReference type="PROSITE" id="PS01310">
    <property type="entry name" value="FXYD"/>
    <property type="match status" value="1"/>
</dbReference>
<keyword id="KW-1003">Cell membrane</keyword>
<keyword id="KW-0318">Glutathionylation</keyword>
<keyword id="KW-0406">Ion transport</keyword>
<keyword id="KW-0449">Lipoprotein</keyword>
<keyword id="KW-0472">Membrane</keyword>
<keyword id="KW-0564">Palmitate</keyword>
<keyword id="KW-0597">Phosphoprotein</keyword>
<keyword id="KW-0630">Potassium</keyword>
<keyword id="KW-0633">Potassium transport</keyword>
<keyword id="KW-1185">Reference proteome</keyword>
<keyword id="KW-0732">Signal</keyword>
<keyword id="KW-0915">Sodium</keyword>
<keyword id="KW-0739">Sodium transport</keyword>
<keyword id="KW-0740">Sodium/potassium transport</keyword>
<keyword id="KW-0812">Transmembrane</keyword>
<keyword id="KW-1133">Transmembrane helix</keyword>
<keyword id="KW-0813">Transport</keyword>
<evidence type="ECO:0000250" key="1">
    <source>
        <dbReference type="UniProtKB" id="O00168"/>
    </source>
</evidence>
<evidence type="ECO:0000250" key="2">
    <source>
        <dbReference type="UniProtKB" id="O08589"/>
    </source>
</evidence>
<evidence type="ECO:0000250" key="3">
    <source>
        <dbReference type="UniProtKB" id="P56513"/>
    </source>
</evidence>
<evidence type="ECO:0000250" key="4">
    <source>
        <dbReference type="UniProtKB" id="Q9Z239"/>
    </source>
</evidence>
<evidence type="ECO:0000255" key="5"/>
<evidence type="ECO:0000256" key="6">
    <source>
        <dbReference type="SAM" id="MobiDB-lite"/>
    </source>
</evidence>
<evidence type="ECO:0000269" key="7">
    <source>
    </source>
</evidence>
<evidence type="ECO:0000305" key="8"/>
<name>PLM_BOVIN</name>
<comment type="function">
    <text evidence="2 3 4 7">Associates with and regulates the activity of the sodium/potassium-transporting ATPase (NKA) which transports Na(+) out of the cell and K(+) into the cell (PubMed:12657675). Inhibits NKA activity in its unphosphorylated state and stimulates activity when phosphorylated (By similarity). Reduces glutathionylation of the NKA beta-1 subunit ATP1B1, thus reversing glutathionylation-mediated inhibition of ATP1B1 (By similarity). Contributes to female sexual development by maintaining the excitability of neurons which secrete gonadotropin-releasing hormone (By similarity).</text>
</comment>
<comment type="subunit">
    <text evidence="1 2 3 4 7">Homotetramer (By similarity). Monomer (By similarity). Regulatory subunit of the sodium/potassium-transporting ATPase (NKA) which is composed of a catalytic alpha subunit, an auxiliary non-catalytic beta subunit and an additional regulatory subunit (PubMed:12657675). The monomeric form associates with NKA while the oligomeric form does not (By similarity). Interacts with the catalytic alpha-1 subunit ATP1A1 (PubMed:12657675). Also interacts with the catalytic alpha-2 and alpha-3 subunits ATP1A2 and ATP1A3 (PubMed:12657675). Very little interaction with ATP1A1, ATP1A2 or ATP1A3 when phosphorylated at Ser-83 (By similarity). Interacts with the non-catalytic beta-1 subunit ATP1B1 (By similarity). Oxidative stress decreases interaction with ATP1A1 but increases interaction with ATP1B1 (By similarity).</text>
</comment>
<comment type="subcellular location">
    <subcellularLocation>
        <location evidence="3">Cell membrane</location>
        <location evidence="3">Sarcolemma</location>
        <topology evidence="5">Single-pass type I membrane protein</topology>
    </subcellularLocation>
    <subcellularLocation>
        <location evidence="2">Apical cell membrane</location>
        <topology evidence="5">Single-pass type I membrane protein</topology>
    </subcellularLocation>
    <subcellularLocation>
        <location evidence="2">Membrane</location>
        <location evidence="2">Caveola</location>
    </subcellularLocation>
    <subcellularLocation>
        <location evidence="2">Cell membrane</location>
        <location evidence="2">Sarcolemma</location>
        <location evidence="2">T-tubule</location>
    </subcellularLocation>
    <text evidence="2">Detected in the apical cell membrane in brain. In myocytes, localizes to sarcolemma, t-tubules and intercalated disks.</text>
</comment>
<comment type="tissue specificity">
    <text evidence="7">In the brain, detected in cerebellum and choroid plexus (at protein level).</text>
</comment>
<comment type="domain">
    <text evidence="2">The cytoplasmic domain is sufficient to regulate sodium/potassium-transporting ATPase activity.</text>
</comment>
<comment type="PTM">
    <text evidence="1 2 3">Major plasma membrane substrate for cAMP-dependent protein kinase (PKA) and protein kinase C (PKC) in several different tissues. Phosphorylated in response to insulin and adrenergic stimulation. Phosphorylation at Ser-88 stimulates sodium/potassium-transporting ATPase activity while the unphosphorylated form inhibits sodium/potassium-transporting ATPase activity. Phosphorylation increases tetramerization, decreases binding to ATP1A1 and reduces inhibition of ATP1A1 activity. Phosphorylation at Ser-83 leads to greatly reduced interaction with ATP1A1, ATP1A2 and ATP1A3. May be phosphorylated by DMPK.</text>
</comment>
<comment type="PTM">
    <text evidence="1">Palmitoylation increases half-life and stability and is enhanced upon phosphorylation at Ser-88 by PKA.</text>
</comment>
<comment type="similarity">
    <text evidence="8">Belongs to the FXYD family.</text>
</comment>
<protein>
    <recommendedName>
        <fullName evidence="3">Phospholemman</fullName>
    </recommendedName>
    <alternativeName>
        <fullName evidence="1">FXYD domain-containing ion transport regulator 1</fullName>
    </alternativeName>
    <alternativeName>
        <fullName evidence="8">Sodium/potassium-transporting ATPase subunit FXYD1</fullName>
    </alternativeName>
</protein>
<feature type="signal peptide" evidence="3">
    <location>
        <begin position="1"/>
        <end position="20"/>
    </location>
</feature>
<feature type="chain" id="PRO_0000283050" description="Phospholemman">
    <location>
        <begin position="21"/>
        <end position="92"/>
    </location>
</feature>
<feature type="topological domain" description="Extracellular" evidence="5">
    <location>
        <begin position="21"/>
        <end position="35"/>
    </location>
</feature>
<feature type="transmembrane region" description="Helical" evidence="5">
    <location>
        <begin position="36"/>
        <end position="56"/>
    </location>
</feature>
<feature type="topological domain" description="Cytoplasmic" evidence="5">
    <location>
        <begin position="57"/>
        <end position="92"/>
    </location>
</feature>
<feature type="region of interest" description="Disordered" evidence="6">
    <location>
        <begin position="65"/>
        <end position="92"/>
    </location>
</feature>
<feature type="compositionally biased region" description="Basic residues" evidence="6">
    <location>
        <begin position="83"/>
        <end position="92"/>
    </location>
</feature>
<feature type="modified residue" description="S-glutathionyl cysteine; alternate" evidence="3">
    <location>
        <position position="62"/>
    </location>
</feature>
<feature type="modified residue" description="Phosphothreonine" evidence="4">
    <location>
        <position position="79"/>
    </location>
</feature>
<feature type="modified residue" description="Phosphoserine" evidence="4">
    <location>
        <position position="82"/>
    </location>
</feature>
<feature type="modified residue" description="Phosphoserine; by PKA and PKC" evidence="3">
    <location>
        <position position="83"/>
    </location>
</feature>
<feature type="modified residue" description="Phosphoserine; by PKA" evidence="3">
    <location>
        <position position="88"/>
    </location>
</feature>
<feature type="modified residue" description="Phosphothreonine; by PKC" evidence="3">
    <location>
        <position position="89"/>
    </location>
</feature>
<feature type="lipid moiety-binding region" description="S-palmitoyl cysteine" evidence="1">
    <location>
        <position position="60"/>
    </location>
</feature>
<feature type="lipid moiety-binding region" description="S-palmitoyl cysteine; alternate" evidence="1">
    <location>
        <position position="62"/>
    </location>
</feature>
<accession>Q3SZX0</accession>
<sequence length="92" mass="10447">MASLSHILVLCVGLLAMVNAEAPQEHDPFTYDYQSLRIGGLIIAGILFILGILIVLSRRCRCKFNQQQRTGEPDEEEGTFRSSIRRLSTRRR</sequence>